<feature type="chain" id="PRO_0000287516" description="Tetratricopeptide repeat protein 33">
    <location>
        <begin position="1"/>
        <end position="262"/>
    </location>
</feature>
<feature type="repeat" description="TPR 1">
    <location>
        <begin position="59"/>
        <end position="92"/>
    </location>
</feature>
<feature type="repeat" description="TPR 2">
    <location>
        <begin position="93"/>
        <end position="126"/>
    </location>
</feature>
<feature type="repeat" description="TPR 3">
    <location>
        <begin position="127"/>
        <end position="160"/>
    </location>
</feature>
<feature type="region of interest" description="Disordered" evidence="2">
    <location>
        <begin position="17"/>
        <end position="63"/>
    </location>
</feature>
<feature type="modified residue" description="Phosphoserine" evidence="1">
    <location>
        <position position="197"/>
    </location>
</feature>
<feature type="splice variant" id="VSP_025532" description="In isoform 2." evidence="3">
    <original>YKEAIQKWDEALQLTPGDATLYEMKSQVLLS</original>
    <variation>SCCLFMKCFQQSMQQRWLSSVTHTRGRRGKL</variation>
    <location>
        <begin position="75"/>
        <end position="105"/>
    </location>
</feature>
<feature type="splice variant" id="VSP_025533" description="In isoform 2." evidence="3">
    <location>
        <begin position="106"/>
        <end position="262"/>
    </location>
</feature>
<evidence type="ECO:0000250" key="1">
    <source>
        <dbReference type="UniProtKB" id="Q6PID6"/>
    </source>
</evidence>
<evidence type="ECO:0000256" key="2">
    <source>
        <dbReference type="SAM" id="MobiDB-lite"/>
    </source>
</evidence>
<evidence type="ECO:0000303" key="3">
    <source>
    </source>
</evidence>
<proteinExistence type="evidence at protein level"/>
<name>TTC33_MOUSE</name>
<accession>Q9D6K7</accession>
<accession>Q8VIG5</accession>
<gene>
    <name type="primary">Ttc33</name>
</gene>
<protein>
    <recommendedName>
        <fullName>Tetratricopeptide repeat protein 33</fullName>
        <shortName>TPR repeat protein 33</shortName>
    </recommendedName>
</protein>
<keyword id="KW-0025">Alternative splicing</keyword>
<keyword id="KW-0597">Phosphoprotein</keyword>
<keyword id="KW-1185">Reference proteome</keyword>
<keyword id="KW-0677">Repeat</keyword>
<keyword id="KW-0802">TPR repeat</keyword>
<organism>
    <name type="scientific">Mus musculus</name>
    <name type="common">Mouse</name>
    <dbReference type="NCBI Taxonomy" id="10090"/>
    <lineage>
        <taxon>Eukaryota</taxon>
        <taxon>Metazoa</taxon>
        <taxon>Chordata</taxon>
        <taxon>Craniata</taxon>
        <taxon>Vertebrata</taxon>
        <taxon>Euteleostomi</taxon>
        <taxon>Mammalia</taxon>
        <taxon>Eutheria</taxon>
        <taxon>Euarchontoglires</taxon>
        <taxon>Glires</taxon>
        <taxon>Rodentia</taxon>
        <taxon>Myomorpha</taxon>
        <taxon>Muroidea</taxon>
        <taxon>Muridae</taxon>
        <taxon>Murinae</taxon>
        <taxon>Mus</taxon>
        <taxon>Mus</taxon>
    </lineage>
</organism>
<dbReference type="EMBL" id="AK013464">
    <property type="protein sequence ID" value="BAB28868.1"/>
    <property type="molecule type" value="mRNA"/>
</dbReference>
<dbReference type="EMBL" id="AK050426">
    <property type="protein sequence ID" value="BAC34250.1"/>
    <property type="molecule type" value="mRNA"/>
</dbReference>
<dbReference type="EMBL" id="AK075643">
    <property type="protein sequence ID" value="BAC35877.1"/>
    <property type="molecule type" value="mRNA"/>
</dbReference>
<dbReference type="EMBL" id="BC017533">
    <property type="protein sequence ID" value="AAH17533.1"/>
    <property type="molecule type" value="mRNA"/>
</dbReference>
<dbReference type="EMBL" id="BC061018">
    <property type="protein sequence ID" value="AAH61018.1"/>
    <property type="molecule type" value="mRNA"/>
</dbReference>
<dbReference type="CCDS" id="CCDS27364.1">
    <molecule id="Q9D6K7-1"/>
</dbReference>
<dbReference type="RefSeq" id="NP_001342549.1">
    <molecule id="Q9D6K7-1"/>
    <property type="nucleotide sequence ID" value="NM_001355620.1"/>
</dbReference>
<dbReference type="RefSeq" id="NP_001342550.1">
    <molecule id="Q9D6K7-1"/>
    <property type="nucleotide sequence ID" value="NM_001355621.1"/>
</dbReference>
<dbReference type="RefSeq" id="NP_080489.1">
    <molecule id="Q9D6K7-1"/>
    <property type="nucleotide sequence ID" value="NM_026213.3"/>
</dbReference>
<dbReference type="RefSeq" id="XP_006520055.1">
    <property type="nucleotide sequence ID" value="XM_006519992.3"/>
</dbReference>
<dbReference type="RefSeq" id="XP_006520056.1">
    <property type="nucleotide sequence ID" value="XM_006519993.2"/>
</dbReference>
<dbReference type="RefSeq" id="XP_030104576.1">
    <molecule id="Q9D6K7-1"/>
    <property type="nucleotide sequence ID" value="XM_030248716.1"/>
</dbReference>
<dbReference type="SMR" id="Q9D6K7"/>
<dbReference type="BioGRID" id="212242">
    <property type="interactions" value="1"/>
</dbReference>
<dbReference type="FunCoup" id="Q9D6K7">
    <property type="interactions" value="188"/>
</dbReference>
<dbReference type="STRING" id="10090.ENSMUSP00000022751"/>
<dbReference type="iPTMnet" id="Q9D6K7"/>
<dbReference type="PhosphoSitePlus" id="Q9D6K7"/>
<dbReference type="PaxDb" id="10090-ENSMUSP00000022751"/>
<dbReference type="PeptideAtlas" id="Q9D6K7"/>
<dbReference type="ProteomicsDB" id="298329">
    <molecule id="Q9D6K7-1"/>
</dbReference>
<dbReference type="ProteomicsDB" id="298330">
    <molecule id="Q9D6K7-2"/>
</dbReference>
<dbReference type="Pumba" id="Q9D6K7"/>
<dbReference type="Antibodypedia" id="23145">
    <property type="antibodies" value="178 antibodies from 23 providers"/>
</dbReference>
<dbReference type="Ensembl" id="ENSMUST00000022751.15">
    <molecule id="Q9D6K7-1"/>
    <property type="protein sequence ID" value="ENSMUSP00000022751.9"/>
    <property type="gene ID" value="ENSMUSG00000022151.17"/>
</dbReference>
<dbReference type="Ensembl" id="ENSMUST00000081640.12">
    <molecule id="Q9D6K7-2"/>
    <property type="protein sequence ID" value="ENSMUSP00000080345.6"/>
    <property type="gene ID" value="ENSMUSG00000022151.17"/>
</dbReference>
<dbReference type="Ensembl" id="ENSMUST00000118193.8">
    <molecule id="Q9D6K7-1"/>
    <property type="protein sequence ID" value="ENSMUSP00000114033.2"/>
    <property type="gene ID" value="ENSMUSG00000022151.17"/>
</dbReference>
<dbReference type="GeneID" id="67515"/>
<dbReference type="KEGG" id="mmu:67515"/>
<dbReference type="UCSC" id="uc007vcv.1">
    <molecule id="Q9D6K7-1"/>
    <property type="organism name" value="mouse"/>
</dbReference>
<dbReference type="AGR" id="MGI:1914765"/>
<dbReference type="CTD" id="23548"/>
<dbReference type="MGI" id="MGI:1914765">
    <property type="gene designation" value="Ttc33"/>
</dbReference>
<dbReference type="VEuPathDB" id="HostDB:ENSMUSG00000022151"/>
<dbReference type="eggNOG" id="KOG0553">
    <property type="taxonomic scope" value="Eukaryota"/>
</dbReference>
<dbReference type="GeneTree" id="ENSGT00390000017462"/>
<dbReference type="HOGENOM" id="CLU_1061581_0_0_1"/>
<dbReference type="InParanoid" id="Q9D6K7"/>
<dbReference type="OMA" id="WQEDLKW"/>
<dbReference type="OrthoDB" id="2423701at2759"/>
<dbReference type="PhylomeDB" id="Q9D6K7"/>
<dbReference type="TreeFam" id="TF332142"/>
<dbReference type="BioGRID-ORCS" id="67515">
    <property type="hits" value="6 hits in 79 CRISPR screens"/>
</dbReference>
<dbReference type="PRO" id="PR:Q9D6K7"/>
<dbReference type="Proteomes" id="UP000000589">
    <property type="component" value="Chromosome 15"/>
</dbReference>
<dbReference type="RNAct" id="Q9D6K7">
    <property type="molecule type" value="protein"/>
</dbReference>
<dbReference type="Bgee" id="ENSMUSG00000022151">
    <property type="expression patterns" value="Expressed in saccule of membranous labyrinth and 259 other cell types or tissues"/>
</dbReference>
<dbReference type="ExpressionAtlas" id="Q9D6K7">
    <property type="expression patterns" value="baseline and differential"/>
</dbReference>
<dbReference type="Gene3D" id="1.25.40.10">
    <property type="entry name" value="Tetratricopeptide repeat domain"/>
    <property type="match status" value="1"/>
</dbReference>
<dbReference type="InterPro" id="IPR052658">
    <property type="entry name" value="TPR-containing"/>
</dbReference>
<dbReference type="InterPro" id="IPR011990">
    <property type="entry name" value="TPR-like_helical_dom_sf"/>
</dbReference>
<dbReference type="InterPro" id="IPR019734">
    <property type="entry name" value="TPR_rpt"/>
</dbReference>
<dbReference type="PANTHER" id="PTHR15544">
    <property type="entry name" value="OSMOSIS RESPONSIVE FACTOR"/>
    <property type="match status" value="1"/>
</dbReference>
<dbReference type="PANTHER" id="PTHR15544:SF0">
    <property type="entry name" value="TETRATRICOPEPTIDE REPEAT PROTEIN 33"/>
    <property type="match status" value="1"/>
</dbReference>
<dbReference type="SMART" id="SM00028">
    <property type="entry name" value="TPR"/>
    <property type="match status" value="2"/>
</dbReference>
<dbReference type="SUPFAM" id="SSF48452">
    <property type="entry name" value="TPR-like"/>
    <property type="match status" value="1"/>
</dbReference>
<dbReference type="PROSITE" id="PS50005">
    <property type="entry name" value="TPR"/>
    <property type="match status" value="3"/>
</dbReference>
<dbReference type="PROSITE" id="PS50293">
    <property type="entry name" value="TPR_REGION"/>
    <property type="match status" value="1"/>
</dbReference>
<reference key="1">
    <citation type="journal article" date="2005" name="Science">
        <title>The transcriptional landscape of the mammalian genome.</title>
        <authorList>
            <person name="Carninci P."/>
            <person name="Kasukawa T."/>
            <person name="Katayama S."/>
            <person name="Gough J."/>
            <person name="Frith M.C."/>
            <person name="Maeda N."/>
            <person name="Oyama R."/>
            <person name="Ravasi T."/>
            <person name="Lenhard B."/>
            <person name="Wells C."/>
            <person name="Kodzius R."/>
            <person name="Shimokawa K."/>
            <person name="Bajic V.B."/>
            <person name="Brenner S.E."/>
            <person name="Batalov S."/>
            <person name="Forrest A.R."/>
            <person name="Zavolan M."/>
            <person name="Davis M.J."/>
            <person name="Wilming L.G."/>
            <person name="Aidinis V."/>
            <person name="Allen J.E."/>
            <person name="Ambesi-Impiombato A."/>
            <person name="Apweiler R."/>
            <person name="Aturaliya R.N."/>
            <person name="Bailey T.L."/>
            <person name="Bansal M."/>
            <person name="Baxter L."/>
            <person name="Beisel K.W."/>
            <person name="Bersano T."/>
            <person name="Bono H."/>
            <person name="Chalk A.M."/>
            <person name="Chiu K.P."/>
            <person name="Choudhary V."/>
            <person name="Christoffels A."/>
            <person name="Clutterbuck D.R."/>
            <person name="Crowe M.L."/>
            <person name="Dalla E."/>
            <person name="Dalrymple B.P."/>
            <person name="de Bono B."/>
            <person name="Della Gatta G."/>
            <person name="di Bernardo D."/>
            <person name="Down T."/>
            <person name="Engstrom P."/>
            <person name="Fagiolini M."/>
            <person name="Faulkner G."/>
            <person name="Fletcher C.F."/>
            <person name="Fukushima T."/>
            <person name="Furuno M."/>
            <person name="Futaki S."/>
            <person name="Gariboldi M."/>
            <person name="Georgii-Hemming P."/>
            <person name="Gingeras T.R."/>
            <person name="Gojobori T."/>
            <person name="Green R.E."/>
            <person name="Gustincich S."/>
            <person name="Harbers M."/>
            <person name="Hayashi Y."/>
            <person name="Hensch T.K."/>
            <person name="Hirokawa N."/>
            <person name="Hill D."/>
            <person name="Huminiecki L."/>
            <person name="Iacono M."/>
            <person name="Ikeo K."/>
            <person name="Iwama A."/>
            <person name="Ishikawa T."/>
            <person name="Jakt M."/>
            <person name="Kanapin A."/>
            <person name="Katoh M."/>
            <person name="Kawasawa Y."/>
            <person name="Kelso J."/>
            <person name="Kitamura H."/>
            <person name="Kitano H."/>
            <person name="Kollias G."/>
            <person name="Krishnan S.P."/>
            <person name="Kruger A."/>
            <person name="Kummerfeld S.K."/>
            <person name="Kurochkin I.V."/>
            <person name="Lareau L.F."/>
            <person name="Lazarevic D."/>
            <person name="Lipovich L."/>
            <person name="Liu J."/>
            <person name="Liuni S."/>
            <person name="McWilliam S."/>
            <person name="Madan Babu M."/>
            <person name="Madera M."/>
            <person name="Marchionni L."/>
            <person name="Matsuda H."/>
            <person name="Matsuzawa S."/>
            <person name="Miki H."/>
            <person name="Mignone F."/>
            <person name="Miyake S."/>
            <person name="Morris K."/>
            <person name="Mottagui-Tabar S."/>
            <person name="Mulder N."/>
            <person name="Nakano N."/>
            <person name="Nakauchi H."/>
            <person name="Ng P."/>
            <person name="Nilsson R."/>
            <person name="Nishiguchi S."/>
            <person name="Nishikawa S."/>
            <person name="Nori F."/>
            <person name="Ohara O."/>
            <person name="Okazaki Y."/>
            <person name="Orlando V."/>
            <person name="Pang K.C."/>
            <person name="Pavan W.J."/>
            <person name="Pavesi G."/>
            <person name="Pesole G."/>
            <person name="Petrovsky N."/>
            <person name="Piazza S."/>
            <person name="Reed J."/>
            <person name="Reid J.F."/>
            <person name="Ring B.Z."/>
            <person name="Ringwald M."/>
            <person name="Rost B."/>
            <person name="Ruan Y."/>
            <person name="Salzberg S.L."/>
            <person name="Sandelin A."/>
            <person name="Schneider C."/>
            <person name="Schoenbach C."/>
            <person name="Sekiguchi K."/>
            <person name="Semple C.A."/>
            <person name="Seno S."/>
            <person name="Sessa L."/>
            <person name="Sheng Y."/>
            <person name="Shibata Y."/>
            <person name="Shimada H."/>
            <person name="Shimada K."/>
            <person name="Silva D."/>
            <person name="Sinclair B."/>
            <person name="Sperling S."/>
            <person name="Stupka E."/>
            <person name="Sugiura K."/>
            <person name="Sultana R."/>
            <person name="Takenaka Y."/>
            <person name="Taki K."/>
            <person name="Tammoja K."/>
            <person name="Tan S.L."/>
            <person name="Tang S."/>
            <person name="Taylor M.S."/>
            <person name="Tegner J."/>
            <person name="Teichmann S.A."/>
            <person name="Ueda H.R."/>
            <person name="van Nimwegen E."/>
            <person name="Verardo R."/>
            <person name="Wei C.L."/>
            <person name="Yagi K."/>
            <person name="Yamanishi H."/>
            <person name="Zabarovsky E."/>
            <person name="Zhu S."/>
            <person name="Zimmer A."/>
            <person name="Hide W."/>
            <person name="Bult C."/>
            <person name="Grimmond S.M."/>
            <person name="Teasdale R.D."/>
            <person name="Liu E.T."/>
            <person name="Brusic V."/>
            <person name="Quackenbush J."/>
            <person name="Wahlestedt C."/>
            <person name="Mattick J.S."/>
            <person name="Hume D.A."/>
            <person name="Kai C."/>
            <person name="Sasaki D."/>
            <person name="Tomaru Y."/>
            <person name="Fukuda S."/>
            <person name="Kanamori-Katayama M."/>
            <person name="Suzuki M."/>
            <person name="Aoki J."/>
            <person name="Arakawa T."/>
            <person name="Iida J."/>
            <person name="Imamura K."/>
            <person name="Itoh M."/>
            <person name="Kato T."/>
            <person name="Kawaji H."/>
            <person name="Kawagashira N."/>
            <person name="Kawashima T."/>
            <person name="Kojima M."/>
            <person name="Kondo S."/>
            <person name="Konno H."/>
            <person name="Nakano K."/>
            <person name="Ninomiya N."/>
            <person name="Nishio T."/>
            <person name="Okada M."/>
            <person name="Plessy C."/>
            <person name="Shibata K."/>
            <person name="Shiraki T."/>
            <person name="Suzuki S."/>
            <person name="Tagami M."/>
            <person name="Waki K."/>
            <person name="Watahiki A."/>
            <person name="Okamura-Oho Y."/>
            <person name="Suzuki H."/>
            <person name="Kawai J."/>
            <person name="Hayashizaki Y."/>
        </authorList>
    </citation>
    <scope>NUCLEOTIDE SEQUENCE [LARGE SCALE MRNA] (ISOFORM 1)</scope>
    <source>
        <strain>C57BL/6J</strain>
        <tissue>Hippocampus</tissue>
        <tissue>Liver</tissue>
    </source>
</reference>
<reference key="2">
    <citation type="journal article" date="2004" name="Genome Res.">
        <title>The status, quality, and expansion of the NIH full-length cDNA project: the Mammalian Gene Collection (MGC).</title>
        <authorList>
            <consortium name="The MGC Project Team"/>
        </authorList>
    </citation>
    <scope>NUCLEOTIDE SEQUENCE [LARGE SCALE MRNA] (ISOFORMS 1 AND 2)</scope>
    <source>
        <tissue>Brain</tissue>
    </source>
</reference>
<reference key="3">
    <citation type="journal article" date="2010" name="Cell">
        <title>A tissue-specific atlas of mouse protein phosphorylation and expression.</title>
        <authorList>
            <person name="Huttlin E.L."/>
            <person name="Jedrychowski M.P."/>
            <person name="Elias J.E."/>
            <person name="Goswami T."/>
            <person name="Rad R."/>
            <person name="Beausoleil S.A."/>
            <person name="Villen J."/>
            <person name="Haas W."/>
            <person name="Sowa M.E."/>
            <person name="Gygi S.P."/>
        </authorList>
    </citation>
    <scope>IDENTIFICATION BY MASS SPECTROMETRY [LARGE SCALE ANALYSIS]</scope>
    <source>
        <tissue>Brain</tissue>
        <tissue>Liver</tissue>
        <tissue>Lung</tissue>
        <tissue>Spleen</tissue>
        <tissue>Testis</tissue>
    </source>
</reference>
<sequence length="262" mass="29371">MASFGWKRRIGEKVSKATSQQFEAEAADEKDAAENEDGNWLQASKRRKETLQEGCKQRSQQLKDEGAQLAENKRYKEAIQKWDEALQLTPGDATLYEMKSQVLLSLHEMFPAVHAAEMAVKRNPHSWEAWQTLGRAQLGLGEIVLAIRSFQIALHIYPMNPELWKEDLSWARKLQEQQKVAQRIENKEMPPEGPDLSPGSIPDYDFESDEIVAVCAAVAEKQKSVSANKTMVIVSASGTVEIVNEKEEGSSTPDGSVFIKAR</sequence>
<comment type="alternative products">
    <event type="alternative splicing"/>
    <isoform>
        <id>Q9D6K7-1</id>
        <name>1</name>
        <sequence type="displayed"/>
    </isoform>
    <isoform>
        <id>Q9D6K7-2</id>
        <name>2</name>
        <sequence type="described" ref="VSP_025532 VSP_025533"/>
    </isoform>
</comment>